<comment type="function">
    <text evidence="1">Catalyzes the phosphorylation of D-glycero-D-manno-heptose 7-phosphate at the C-1 position to selectively form D-glycero-beta-D-manno-heptose-1,7-bisphosphate.</text>
</comment>
<comment type="function">
    <text evidence="1">Catalyzes the ADP transfer from ATP to D-glycero-beta-D-manno-heptose 1-phosphate, yielding ADP-D-glycero-beta-D-manno-heptose.</text>
</comment>
<comment type="catalytic activity">
    <reaction evidence="1">
        <text>D-glycero-beta-D-manno-heptose 7-phosphate + ATP = D-glycero-beta-D-manno-heptose 1,7-bisphosphate + ADP + H(+)</text>
        <dbReference type="Rhea" id="RHEA:27473"/>
        <dbReference type="ChEBI" id="CHEBI:15378"/>
        <dbReference type="ChEBI" id="CHEBI:30616"/>
        <dbReference type="ChEBI" id="CHEBI:60204"/>
        <dbReference type="ChEBI" id="CHEBI:60208"/>
        <dbReference type="ChEBI" id="CHEBI:456216"/>
        <dbReference type="EC" id="2.7.1.167"/>
    </reaction>
</comment>
<comment type="catalytic activity">
    <reaction evidence="1">
        <text>D-glycero-beta-D-manno-heptose 1-phosphate + ATP + H(+) = ADP-D-glycero-beta-D-manno-heptose + diphosphate</text>
        <dbReference type="Rhea" id="RHEA:27465"/>
        <dbReference type="ChEBI" id="CHEBI:15378"/>
        <dbReference type="ChEBI" id="CHEBI:30616"/>
        <dbReference type="ChEBI" id="CHEBI:33019"/>
        <dbReference type="ChEBI" id="CHEBI:59967"/>
        <dbReference type="ChEBI" id="CHEBI:61593"/>
        <dbReference type="EC" id="2.7.7.70"/>
    </reaction>
</comment>
<comment type="pathway">
    <text evidence="1">Nucleotide-sugar biosynthesis; ADP-L-glycero-beta-D-manno-heptose biosynthesis; ADP-L-glycero-beta-D-manno-heptose from D-glycero-beta-D-manno-heptose 7-phosphate: step 1/4.</text>
</comment>
<comment type="pathway">
    <text evidence="1">Nucleotide-sugar biosynthesis; ADP-L-glycero-beta-D-manno-heptose biosynthesis; ADP-L-glycero-beta-D-manno-heptose from D-glycero-beta-D-manno-heptose 7-phosphate: step 3/4.</text>
</comment>
<comment type="subunit">
    <text evidence="1">Homodimer.</text>
</comment>
<comment type="similarity">
    <text evidence="1">In the N-terminal section; belongs to the carbohydrate kinase PfkB family.</text>
</comment>
<comment type="similarity">
    <text evidence="1">In the C-terminal section; belongs to the cytidylyltransferase family.</text>
</comment>
<name>HLDE_SALNS</name>
<organism>
    <name type="scientific">Salmonella newport (strain SL254)</name>
    <dbReference type="NCBI Taxonomy" id="423368"/>
    <lineage>
        <taxon>Bacteria</taxon>
        <taxon>Pseudomonadati</taxon>
        <taxon>Pseudomonadota</taxon>
        <taxon>Gammaproteobacteria</taxon>
        <taxon>Enterobacterales</taxon>
        <taxon>Enterobacteriaceae</taxon>
        <taxon>Salmonella</taxon>
    </lineage>
</organism>
<gene>
    <name evidence="1" type="primary">hldE</name>
    <name type="ordered locus">SNSL254_A3460</name>
</gene>
<protein>
    <recommendedName>
        <fullName evidence="1">Bifunctional protein HldE</fullName>
    </recommendedName>
    <domain>
        <recommendedName>
            <fullName evidence="1">D-beta-D-heptose 7-phosphate kinase</fullName>
            <ecNumber evidence="1">2.7.1.167</ecNumber>
        </recommendedName>
        <alternativeName>
            <fullName evidence="1">D-beta-D-heptose 7-phosphotransferase</fullName>
        </alternativeName>
        <alternativeName>
            <fullName evidence="1">D-glycero-beta-D-manno-heptose-7-phosphate kinase</fullName>
        </alternativeName>
    </domain>
    <domain>
        <recommendedName>
            <fullName evidence="1">D-beta-D-heptose 1-phosphate adenylyltransferase</fullName>
            <ecNumber evidence="1">2.7.7.70</ecNumber>
        </recommendedName>
        <alternativeName>
            <fullName evidence="1">D-glycero-beta-D-manno-heptose 1-phosphate adenylyltransferase</fullName>
        </alternativeName>
    </domain>
</protein>
<proteinExistence type="inferred from homology"/>
<reference key="1">
    <citation type="journal article" date="2011" name="J. Bacteriol.">
        <title>Comparative genomics of 28 Salmonella enterica isolates: evidence for CRISPR-mediated adaptive sublineage evolution.</title>
        <authorList>
            <person name="Fricke W.F."/>
            <person name="Mammel M.K."/>
            <person name="McDermott P.F."/>
            <person name="Tartera C."/>
            <person name="White D.G."/>
            <person name="Leclerc J.E."/>
            <person name="Ravel J."/>
            <person name="Cebula T.A."/>
        </authorList>
    </citation>
    <scope>NUCLEOTIDE SEQUENCE [LARGE SCALE GENOMIC DNA]</scope>
    <source>
        <strain>SL254</strain>
    </source>
</reference>
<keyword id="KW-0067">ATP-binding</keyword>
<keyword id="KW-0119">Carbohydrate metabolism</keyword>
<keyword id="KW-0418">Kinase</keyword>
<keyword id="KW-0511">Multifunctional enzyme</keyword>
<keyword id="KW-0547">Nucleotide-binding</keyword>
<keyword id="KW-0548">Nucleotidyltransferase</keyword>
<keyword id="KW-0808">Transferase</keyword>
<dbReference type="EC" id="2.7.1.167" evidence="1"/>
<dbReference type="EC" id="2.7.7.70" evidence="1"/>
<dbReference type="EMBL" id="CP001113">
    <property type="protein sequence ID" value="ACF65484.1"/>
    <property type="molecule type" value="Genomic_DNA"/>
</dbReference>
<dbReference type="RefSeq" id="WP_000867682.1">
    <property type="nucleotide sequence ID" value="NZ_CCMR01000001.1"/>
</dbReference>
<dbReference type="SMR" id="B4T670"/>
<dbReference type="KEGG" id="see:SNSL254_A3460"/>
<dbReference type="HOGENOM" id="CLU_021150_2_1_6"/>
<dbReference type="UniPathway" id="UPA00356">
    <property type="reaction ID" value="UER00437"/>
</dbReference>
<dbReference type="UniPathway" id="UPA00356">
    <property type="reaction ID" value="UER00439"/>
</dbReference>
<dbReference type="Proteomes" id="UP000008824">
    <property type="component" value="Chromosome"/>
</dbReference>
<dbReference type="GO" id="GO:0005829">
    <property type="term" value="C:cytosol"/>
    <property type="evidence" value="ECO:0007669"/>
    <property type="project" value="TreeGrafter"/>
</dbReference>
<dbReference type="GO" id="GO:0005524">
    <property type="term" value="F:ATP binding"/>
    <property type="evidence" value="ECO:0007669"/>
    <property type="project" value="UniProtKB-UniRule"/>
</dbReference>
<dbReference type="GO" id="GO:0033785">
    <property type="term" value="F:heptose 7-phosphate kinase activity"/>
    <property type="evidence" value="ECO:0007669"/>
    <property type="project" value="UniProtKB-UniRule"/>
</dbReference>
<dbReference type="GO" id="GO:0033786">
    <property type="term" value="F:heptose-1-phosphate adenylyltransferase activity"/>
    <property type="evidence" value="ECO:0007669"/>
    <property type="project" value="UniProtKB-UniRule"/>
</dbReference>
<dbReference type="GO" id="GO:0016773">
    <property type="term" value="F:phosphotransferase activity, alcohol group as acceptor"/>
    <property type="evidence" value="ECO:0007669"/>
    <property type="project" value="InterPro"/>
</dbReference>
<dbReference type="GO" id="GO:0097171">
    <property type="term" value="P:ADP-L-glycero-beta-D-manno-heptose biosynthetic process"/>
    <property type="evidence" value="ECO:0007669"/>
    <property type="project" value="UniProtKB-UniPathway"/>
</dbReference>
<dbReference type="CDD" id="cd01172">
    <property type="entry name" value="RfaE_like"/>
    <property type="match status" value="1"/>
</dbReference>
<dbReference type="FunFam" id="3.40.1190.20:FF:000002">
    <property type="entry name" value="Bifunctional protein HldE"/>
    <property type="match status" value="1"/>
</dbReference>
<dbReference type="FunFam" id="3.40.50.620:FF:000028">
    <property type="entry name" value="Bifunctional protein HldE"/>
    <property type="match status" value="1"/>
</dbReference>
<dbReference type="Gene3D" id="3.40.1190.20">
    <property type="match status" value="1"/>
</dbReference>
<dbReference type="Gene3D" id="3.40.50.620">
    <property type="entry name" value="HUPs"/>
    <property type="match status" value="1"/>
</dbReference>
<dbReference type="HAMAP" id="MF_01603">
    <property type="entry name" value="HldE"/>
    <property type="match status" value="1"/>
</dbReference>
<dbReference type="InterPro" id="IPR023030">
    <property type="entry name" value="Bifunc_HldE"/>
</dbReference>
<dbReference type="InterPro" id="IPR002173">
    <property type="entry name" value="Carboh/pur_kinase_PfkB_CS"/>
</dbReference>
<dbReference type="InterPro" id="IPR004821">
    <property type="entry name" value="Cyt_trans-like"/>
</dbReference>
<dbReference type="InterPro" id="IPR011611">
    <property type="entry name" value="PfkB_dom"/>
</dbReference>
<dbReference type="InterPro" id="IPR011913">
    <property type="entry name" value="RfaE_dom_I"/>
</dbReference>
<dbReference type="InterPro" id="IPR011914">
    <property type="entry name" value="RfaE_dom_II"/>
</dbReference>
<dbReference type="InterPro" id="IPR029056">
    <property type="entry name" value="Ribokinase-like"/>
</dbReference>
<dbReference type="InterPro" id="IPR014729">
    <property type="entry name" value="Rossmann-like_a/b/a_fold"/>
</dbReference>
<dbReference type="NCBIfam" id="TIGR00125">
    <property type="entry name" value="cyt_tran_rel"/>
    <property type="match status" value="1"/>
</dbReference>
<dbReference type="NCBIfam" id="NF008454">
    <property type="entry name" value="PRK11316.1"/>
    <property type="match status" value="1"/>
</dbReference>
<dbReference type="NCBIfam" id="TIGR02198">
    <property type="entry name" value="rfaE_dom_I"/>
    <property type="match status" value="1"/>
</dbReference>
<dbReference type="NCBIfam" id="TIGR02199">
    <property type="entry name" value="rfaE_dom_II"/>
    <property type="match status" value="1"/>
</dbReference>
<dbReference type="PANTHER" id="PTHR46969">
    <property type="entry name" value="BIFUNCTIONAL PROTEIN HLDE"/>
    <property type="match status" value="1"/>
</dbReference>
<dbReference type="PANTHER" id="PTHR46969:SF1">
    <property type="entry name" value="BIFUNCTIONAL PROTEIN HLDE"/>
    <property type="match status" value="1"/>
</dbReference>
<dbReference type="Pfam" id="PF01467">
    <property type="entry name" value="CTP_transf_like"/>
    <property type="match status" value="1"/>
</dbReference>
<dbReference type="Pfam" id="PF00294">
    <property type="entry name" value="PfkB"/>
    <property type="match status" value="1"/>
</dbReference>
<dbReference type="SUPFAM" id="SSF52374">
    <property type="entry name" value="Nucleotidylyl transferase"/>
    <property type="match status" value="1"/>
</dbReference>
<dbReference type="SUPFAM" id="SSF53613">
    <property type="entry name" value="Ribokinase-like"/>
    <property type="match status" value="1"/>
</dbReference>
<dbReference type="PROSITE" id="PS00583">
    <property type="entry name" value="PFKB_KINASES_1"/>
    <property type="match status" value="1"/>
</dbReference>
<accession>B4T670</accession>
<evidence type="ECO:0000255" key="1">
    <source>
        <dbReference type="HAMAP-Rule" id="MF_01603"/>
    </source>
</evidence>
<feature type="chain" id="PRO_1000185819" description="Bifunctional protein HldE">
    <location>
        <begin position="1"/>
        <end position="477"/>
    </location>
</feature>
<feature type="region of interest" description="Ribokinase">
    <location>
        <begin position="1"/>
        <end position="318"/>
    </location>
</feature>
<feature type="region of interest" description="Cytidylyltransferase">
    <location>
        <begin position="344"/>
        <end position="477"/>
    </location>
</feature>
<feature type="active site" evidence="1">
    <location>
        <position position="264"/>
    </location>
</feature>
<feature type="binding site" evidence="1">
    <location>
        <begin position="195"/>
        <end position="198"/>
    </location>
    <ligand>
        <name>ATP</name>
        <dbReference type="ChEBI" id="CHEBI:30616"/>
    </ligand>
</feature>
<sequence length="477" mass="51124">MKVNLPAFERAGVMVVGDVMLDRYWYGPTCRISPEAPVPVVKVNTVEERPGGAANVAMNIASLGANARLVGLTGIDDAARALSKTLAEVNVKCDFVSVPTHPTITKLRVLSRNQQLIRLDFEEGFEGVDPQPLHERINQALGSIGALVLSDYAKGALTSVQTMISLARQAGVPVLIDPKGTDFERYRGATLLTPNLSEFEAVAGKCKSEDELVERGMKLIADYDLSALLVTRSEQGMTLLQPNKAPLHMPTQAQEVYDVTGAGDTVIGVLAATLAAGNTLEEACYFANAAAGVVVGKLGTSTVSPIELENAVRGRADTGFGVMTEEELRQAVASARKRGEKVVMTNGVFDILHAGHVSYLANARKLGDRLIVAVNSDASTKRLKGESRPVNPLEQRMIVLGALESVDWVVSFEEDTPQRLIAGILPDLLVKGGDYKPEEIAGSEEVWANGGEVMVLNFEDGCSTTNIIKKIQTESEK</sequence>